<dbReference type="EC" id="3.1.1.29" evidence="1"/>
<dbReference type="EMBL" id="CP001138">
    <property type="protein sequence ID" value="ACH52018.1"/>
    <property type="molecule type" value="Genomic_DNA"/>
</dbReference>
<dbReference type="RefSeq" id="WP_000985595.1">
    <property type="nucleotide sequence ID" value="NC_011149.1"/>
</dbReference>
<dbReference type="SMR" id="B5F4G7"/>
<dbReference type="KEGG" id="sea:SeAg_B1354"/>
<dbReference type="HOGENOM" id="CLU_062456_3_1_6"/>
<dbReference type="Proteomes" id="UP000008819">
    <property type="component" value="Chromosome"/>
</dbReference>
<dbReference type="GO" id="GO:0005737">
    <property type="term" value="C:cytoplasm"/>
    <property type="evidence" value="ECO:0007669"/>
    <property type="project" value="UniProtKB-SubCell"/>
</dbReference>
<dbReference type="GO" id="GO:0004045">
    <property type="term" value="F:peptidyl-tRNA hydrolase activity"/>
    <property type="evidence" value="ECO:0007669"/>
    <property type="project" value="UniProtKB-UniRule"/>
</dbReference>
<dbReference type="GO" id="GO:0000049">
    <property type="term" value="F:tRNA binding"/>
    <property type="evidence" value="ECO:0007669"/>
    <property type="project" value="UniProtKB-UniRule"/>
</dbReference>
<dbReference type="GO" id="GO:0006515">
    <property type="term" value="P:protein quality control for misfolded or incompletely synthesized proteins"/>
    <property type="evidence" value="ECO:0007669"/>
    <property type="project" value="UniProtKB-UniRule"/>
</dbReference>
<dbReference type="GO" id="GO:0072344">
    <property type="term" value="P:rescue of stalled ribosome"/>
    <property type="evidence" value="ECO:0007669"/>
    <property type="project" value="UniProtKB-UniRule"/>
</dbReference>
<dbReference type="CDD" id="cd00462">
    <property type="entry name" value="PTH"/>
    <property type="match status" value="1"/>
</dbReference>
<dbReference type="FunFam" id="3.40.50.1470:FF:000001">
    <property type="entry name" value="Peptidyl-tRNA hydrolase"/>
    <property type="match status" value="1"/>
</dbReference>
<dbReference type="Gene3D" id="3.40.50.1470">
    <property type="entry name" value="Peptidyl-tRNA hydrolase"/>
    <property type="match status" value="1"/>
</dbReference>
<dbReference type="HAMAP" id="MF_00083">
    <property type="entry name" value="Pept_tRNA_hydro_bact"/>
    <property type="match status" value="1"/>
</dbReference>
<dbReference type="InterPro" id="IPR001328">
    <property type="entry name" value="Pept_tRNA_hydro"/>
</dbReference>
<dbReference type="InterPro" id="IPR018171">
    <property type="entry name" value="Pept_tRNA_hydro_CS"/>
</dbReference>
<dbReference type="InterPro" id="IPR036416">
    <property type="entry name" value="Pept_tRNA_hydro_sf"/>
</dbReference>
<dbReference type="NCBIfam" id="TIGR00447">
    <property type="entry name" value="pth"/>
    <property type="match status" value="1"/>
</dbReference>
<dbReference type="PANTHER" id="PTHR17224">
    <property type="entry name" value="PEPTIDYL-TRNA HYDROLASE"/>
    <property type="match status" value="1"/>
</dbReference>
<dbReference type="PANTHER" id="PTHR17224:SF1">
    <property type="entry name" value="PEPTIDYL-TRNA HYDROLASE"/>
    <property type="match status" value="1"/>
</dbReference>
<dbReference type="Pfam" id="PF01195">
    <property type="entry name" value="Pept_tRNA_hydro"/>
    <property type="match status" value="1"/>
</dbReference>
<dbReference type="SUPFAM" id="SSF53178">
    <property type="entry name" value="Peptidyl-tRNA hydrolase-like"/>
    <property type="match status" value="1"/>
</dbReference>
<dbReference type="PROSITE" id="PS01195">
    <property type="entry name" value="PEPT_TRNA_HYDROL_1"/>
    <property type="match status" value="1"/>
</dbReference>
<dbReference type="PROSITE" id="PS01196">
    <property type="entry name" value="PEPT_TRNA_HYDROL_2"/>
    <property type="match status" value="1"/>
</dbReference>
<reference key="1">
    <citation type="journal article" date="2011" name="J. Bacteriol.">
        <title>Comparative genomics of 28 Salmonella enterica isolates: evidence for CRISPR-mediated adaptive sublineage evolution.</title>
        <authorList>
            <person name="Fricke W.F."/>
            <person name="Mammel M.K."/>
            <person name="McDermott P.F."/>
            <person name="Tartera C."/>
            <person name="White D.G."/>
            <person name="Leclerc J.E."/>
            <person name="Ravel J."/>
            <person name="Cebula T.A."/>
        </authorList>
    </citation>
    <scope>NUCLEOTIDE SEQUENCE [LARGE SCALE GENOMIC DNA]</scope>
    <source>
        <strain>SL483</strain>
    </source>
</reference>
<keyword id="KW-0963">Cytoplasm</keyword>
<keyword id="KW-0378">Hydrolase</keyword>
<keyword id="KW-0694">RNA-binding</keyword>
<keyword id="KW-0820">tRNA-binding</keyword>
<organism>
    <name type="scientific">Salmonella agona (strain SL483)</name>
    <dbReference type="NCBI Taxonomy" id="454166"/>
    <lineage>
        <taxon>Bacteria</taxon>
        <taxon>Pseudomonadati</taxon>
        <taxon>Pseudomonadota</taxon>
        <taxon>Gammaproteobacteria</taxon>
        <taxon>Enterobacterales</taxon>
        <taxon>Enterobacteriaceae</taxon>
        <taxon>Salmonella</taxon>
    </lineage>
</organism>
<protein>
    <recommendedName>
        <fullName evidence="1">Peptidyl-tRNA hydrolase</fullName>
        <shortName evidence="1">Pth</shortName>
        <ecNumber evidence="1">3.1.1.29</ecNumber>
    </recommendedName>
</protein>
<gene>
    <name evidence="1" type="primary">pth</name>
    <name type="ordered locus">SeAg_B1354</name>
</gene>
<name>PTH_SALA4</name>
<proteinExistence type="inferred from homology"/>
<comment type="function">
    <text evidence="1">Hydrolyzes ribosome-free peptidyl-tRNAs (with 1 or more amino acids incorporated), which drop off the ribosome during protein synthesis, or as a result of ribosome stalling.</text>
</comment>
<comment type="function">
    <text evidence="1">Catalyzes the release of premature peptidyl moieties from peptidyl-tRNA molecules trapped in stalled 50S ribosomal subunits, and thus maintains levels of free tRNAs and 50S ribosomes.</text>
</comment>
<comment type="catalytic activity">
    <reaction evidence="1">
        <text>an N-acyl-L-alpha-aminoacyl-tRNA + H2O = an N-acyl-L-amino acid + a tRNA + H(+)</text>
        <dbReference type="Rhea" id="RHEA:54448"/>
        <dbReference type="Rhea" id="RHEA-COMP:10123"/>
        <dbReference type="Rhea" id="RHEA-COMP:13883"/>
        <dbReference type="ChEBI" id="CHEBI:15377"/>
        <dbReference type="ChEBI" id="CHEBI:15378"/>
        <dbReference type="ChEBI" id="CHEBI:59874"/>
        <dbReference type="ChEBI" id="CHEBI:78442"/>
        <dbReference type="ChEBI" id="CHEBI:138191"/>
        <dbReference type="EC" id="3.1.1.29"/>
    </reaction>
</comment>
<comment type="subunit">
    <text evidence="1">Monomer.</text>
</comment>
<comment type="subcellular location">
    <subcellularLocation>
        <location evidence="1">Cytoplasm</location>
    </subcellularLocation>
</comment>
<comment type="similarity">
    <text evidence="1">Belongs to the PTH family.</text>
</comment>
<evidence type="ECO:0000255" key="1">
    <source>
        <dbReference type="HAMAP-Rule" id="MF_00083"/>
    </source>
</evidence>
<feature type="chain" id="PRO_1000092978" description="Peptidyl-tRNA hydrolase">
    <location>
        <begin position="1"/>
        <end position="194"/>
    </location>
</feature>
<feature type="active site" description="Proton acceptor" evidence="1">
    <location>
        <position position="21"/>
    </location>
</feature>
<feature type="binding site" evidence="1">
    <location>
        <position position="16"/>
    </location>
    <ligand>
        <name>tRNA</name>
        <dbReference type="ChEBI" id="CHEBI:17843"/>
    </ligand>
</feature>
<feature type="binding site" evidence="1">
    <location>
        <position position="67"/>
    </location>
    <ligand>
        <name>tRNA</name>
        <dbReference type="ChEBI" id="CHEBI:17843"/>
    </ligand>
</feature>
<feature type="binding site" evidence="1">
    <location>
        <position position="69"/>
    </location>
    <ligand>
        <name>tRNA</name>
        <dbReference type="ChEBI" id="CHEBI:17843"/>
    </ligand>
</feature>
<feature type="binding site" evidence="1">
    <location>
        <position position="115"/>
    </location>
    <ligand>
        <name>tRNA</name>
        <dbReference type="ChEBI" id="CHEBI:17843"/>
    </ligand>
</feature>
<feature type="site" description="Discriminates between blocked and unblocked aminoacyl-tRNA" evidence="1">
    <location>
        <position position="11"/>
    </location>
</feature>
<feature type="site" description="Stabilizes the basic form of H active site to accept a proton" evidence="1">
    <location>
        <position position="94"/>
    </location>
</feature>
<accession>B5F4G7</accession>
<sequence>MAIKLIVGLANPGAEYAATRHNAGAWYVDLLAERLRAPLREEPKFFGYTSRITLEGEDVRLLVPTTFMNLSGKAVGAMASFYRIQPDEILVAHDELDLPPGVAKFKLGGGHGGHNGLKDIISKLGNNPNFHRLRVGIGHPGDKNKVVGFVLGKPPVSEQKLIDEAIDEAARCTELWFKEGLAKATSRLHTFKAQ</sequence>